<feature type="chain" id="PRO_0000089215" description="Macro domain-containing protein in non 5'region">
    <location>
        <begin position="1"/>
        <end position="177"/>
    </location>
</feature>
<feature type="domain" description="Macro" evidence="1">
    <location>
        <begin position="1"/>
        <end position="177"/>
    </location>
</feature>
<dbReference type="EMBL" id="AH009582">
    <property type="protein sequence ID" value="AAF81228.1"/>
    <property type="molecule type" value="Genomic_DNA"/>
</dbReference>
<dbReference type="SMR" id="Q9KHE2"/>
<dbReference type="STRING" id="1911.GCA_001715295_00878"/>
<dbReference type="CDD" id="cd02908">
    <property type="entry name" value="Macro_OAADPr_deacetylase"/>
    <property type="match status" value="1"/>
</dbReference>
<dbReference type="Gene3D" id="3.40.220.10">
    <property type="entry name" value="Leucine Aminopeptidase, subunit E, domain 1"/>
    <property type="match status" value="1"/>
</dbReference>
<dbReference type="InterPro" id="IPR002589">
    <property type="entry name" value="Macro_dom"/>
</dbReference>
<dbReference type="InterPro" id="IPR043472">
    <property type="entry name" value="Macro_dom-like"/>
</dbReference>
<dbReference type="NCBIfam" id="NF001664">
    <property type="entry name" value="PRK00431.1-6"/>
    <property type="match status" value="1"/>
</dbReference>
<dbReference type="PANTHER" id="PTHR11106">
    <property type="entry name" value="GANGLIOSIDE INDUCED DIFFERENTIATION ASSOCIATED PROTEIN 2-RELATED"/>
    <property type="match status" value="1"/>
</dbReference>
<dbReference type="PANTHER" id="PTHR11106:SF27">
    <property type="entry name" value="MACRO DOMAIN-CONTAINING PROTEIN"/>
    <property type="match status" value="1"/>
</dbReference>
<dbReference type="Pfam" id="PF01661">
    <property type="entry name" value="Macro"/>
    <property type="match status" value="1"/>
</dbReference>
<dbReference type="SMART" id="SM00506">
    <property type="entry name" value="A1pp"/>
    <property type="match status" value="1"/>
</dbReference>
<dbReference type="SUPFAM" id="SSF52949">
    <property type="entry name" value="Macro domain-like"/>
    <property type="match status" value="1"/>
</dbReference>
<dbReference type="PROSITE" id="PS51154">
    <property type="entry name" value="MACRO"/>
    <property type="match status" value="1"/>
</dbReference>
<sequence>MSTSVSPVVRLVRGDITDQSVDVIVNAANSSLLGGGGVDGAIHRRGGPDILAACRELRASRYGKGLPTGQAVATTAGRLDARWIVHTVGPVFSGAQDRSALLASCYRESLRLAAELGARSIAFPAISTGIYGWPMDDGARIAVRTVLAETVEPVEEVRFVLFDAHAYVEFEEVLAMR</sequence>
<accession>Q9KHE2</accession>
<reference key="1">
    <citation type="journal article" date="2000" name="Antimicrob. Agents Chemother.">
        <title>Genetic localization and molecular characterization of the nonS gene required for macrotetrolide biosynthesis in Streptomyces griseus DSM40695.</title>
        <authorList>
            <person name="Smith W.C."/>
            <person name="Xiang L."/>
            <person name="Shen B."/>
        </authorList>
    </citation>
    <scope>NUCLEOTIDE SEQUENCE [GENOMIC DNA]</scope>
    <source>
        <strain>DSM 40695 / ETH 7796 / Tue 10</strain>
    </source>
</reference>
<protein>
    <recommendedName>
        <fullName>Macro domain-containing protein in non 5'region</fullName>
    </recommendedName>
    <alternativeName>
        <fullName>ORF1</fullName>
    </alternativeName>
</protein>
<name>Y189_STRGR</name>
<organism>
    <name type="scientific">Streptomyces griseus</name>
    <dbReference type="NCBI Taxonomy" id="1911"/>
    <lineage>
        <taxon>Bacteria</taxon>
        <taxon>Bacillati</taxon>
        <taxon>Actinomycetota</taxon>
        <taxon>Actinomycetes</taxon>
        <taxon>Kitasatosporales</taxon>
        <taxon>Streptomycetaceae</taxon>
        <taxon>Streptomyces</taxon>
    </lineage>
</organism>
<evidence type="ECO:0000255" key="1">
    <source>
        <dbReference type="PROSITE-ProRule" id="PRU00490"/>
    </source>
</evidence>
<evidence type="ECO:0000305" key="2"/>
<comment type="similarity">
    <text evidence="2">Belongs to the MacroD-type family.</text>
</comment>
<proteinExistence type="inferred from homology"/>